<accession>Q96N68</accession>
<comment type="subcellular location">
    <subcellularLocation>
        <location evidence="2">Membrane</location>
        <topology evidence="2">Single-pass membrane protein</topology>
    </subcellularLocation>
</comment>
<comment type="caution">
    <text evidence="2">Product of a dubious CDS prediction.</text>
</comment>
<dbReference type="EMBL" id="AK055900">
    <property type="status" value="NOT_ANNOTATED_CDS"/>
    <property type="molecule type" value="mRNA"/>
</dbReference>
<dbReference type="BioMuta" id="HGNC:26447"/>
<dbReference type="PeptideAtlas" id="Q96N68"/>
<dbReference type="AGR" id="HGNC:26447"/>
<dbReference type="GeneCards" id="C18orf15"/>
<dbReference type="HGNC" id="HGNC:26447">
    <property type="gene designation" value="C18orf15"/>
</dbReference>
<dbReference type="neXtProt" id="NX_Q96N68"/>
<dbReference type="InParanoid" id="Q96N68"/>
<dbReference type="PAN-GO" id="Q96N68">
    <property type="GO annotations" value="0 GO annotations based on evolutionary models"/>
</dbReference>
<dbReference type="Pharos" id="Q96N68">
    <property type="development level" value="Tdark"/>
</dbReference>
<dbReference type="Proteomes" id="UP000005640">
    <property type="component" value="Unplaced"/>
</dbReference>
<dbReference type="RNAct" id="Q96N68">
    <property type="molecule type" value="protein"/>
</dbReference>
<dbReference type="GO" id="GO:0016020">
    <property type="term" value="C:membrane"/>
    <property type="evidence" value="ECO:0007669"/>
    <property type="project" value="UniProtKB-SubCell"/>
</dbReference>
<sequence length="181" mass="19136">MQGQGALKESHIHLPTEQPEASLVLQGQLAESSALGPKGALRPQAQSPDVPVSWWQGSGKRLSHRLPHICSQPPLGPFLPLTWPSCGFFGLGGAASASLGLEVLQDSVSTWARGPCCPVHPQSLTVVCMCACMCVCVHVCACVYVCMCVLVCMCACACMRAHRYFLMDCAGICSPHGPGTQ</sequence>
<feature type="chain" id="PRO_0000079309" description="Putative uncharacterized protein C18orf15">
    <location>
        <begin position="1"/>
        <end position="181"/>
    </location>
</feature>
<feature type="transmembrane region" description="Helical" evidence="1">
    <location>
        <begin position="133"/>
        <end position="153"/>
    </location>
</feature>
<proteinExistence type="uncertain"/>
<protein>
    <recommendedName>
        <fullName>Putative uncharacterized protein C18orf15</fullName>
    </recommendedName>
</protein>
<evidence type="ECO:0000255" key="1"/>
<evidence type="ECO:0000305" key="2"/>
<organism>
    <name type="scientific">Homo sapiens</name>
    <name type="common">Human</name>
    <dbReference type="NCBI Taxonomy" id="9606"/>
    <lineage>
        <taxon>Eukaryota</taxon>
        <taxon>Metazoa</taxon>
        <taxon>Chordata</taxon>
        <taxon>Craniata</taxon>
        <taxon>Vertebrata</taxon>
        <taxon>Euteleostomi</taxon>
        <taxon>Mammalia</taxon>
        <taxon>Eutheria</taxon>
        <taxon>Euarchontoglires</taxon>
        <taxon>Primates</taxon>
        <taxon>Haplorrhini</taxon>
        <taxon>Catarrhini</taxon>
        <taxon>Hominidae</taxon>
        <taxon>Homo</taxon>
    </lineage>
</organism>
<reference key="1">
    <citation type="journal article" date="2004" name="Nat. Genet.">
        <title>Complete sequencing and characterization of 21,243 full-length human cDNAs.</title>
        <authorList>
            <person name="Ota T."/>
            <person name="Suzuki Y."/>
            <person name="Nishikawa T."/>
            <person name="Otsuki T."/>
            <person name="Sugiyama T."/>
            <person name="Irie R."/>
            <person name="Wakamatsu A."/>
            <person name="Hayashi K."/>
            <person name="Sato H."/>
            <person name="Nagai K."/>
            <person name="Kimura K."/>
            <person name="Makita H."/>
            <person name="Sekine M."/>
            <person name="Obayashi M."/>
            <person name="Nishi T."/>
            <person name="Shibahara T."/>
            <person name="Tanaka T."/>
            <person name="Ishii S."/>
            <person name="Yamamoto J."/>
            <person name="Saito K."/>
            <person name="Kawai Y."/>
            <person name="Isono Y."/>
            <person name="Nakamura Y."/>
            <person name="Nagahari K."/>
            <person name="Murakami K."/>
            <person name="Yasuda T."/>
            <person name="Iwayanagi T."/>
            <person name="Wagatsuma M."/>
            <person name="Shiratori A."/>
            <person name="Sudo H."/>
            <person name="Hosoiri T."/>
            <person name="Kaku Y."/>
            <person name="Kodaira H."/>
            <person name="Kondo H."/>
            <person name="Sugawara M."/>
            <person name="Takahashi M."/>
            <person name="Kanda K."/>
            <person name="Yokoi T."/>
            <person name="Furuya T."/>
            <person name="Kikkawa E."/>
            <person name="Omura Y."/>
            <person name="Abe K."/>
            <person name="Kamihara K."/>
            <person name="Katsuta N."/>
            <person name="Sato K."/>
            <person name="Tanikawa M."/>
            <person name="Yamazaki M."/>
            <person name="Ninomiya K."/>
            <person name="Ishibashi T."/>
            <person name="Yamashita H."/>
            <person name="Murakawa K."/>
            <person name="Fujimori K."/>
            <person name="Tanai H."/>
            <person name="Kimata M."/>
            <person name="Watanabe M."/>
            <person name="Hiraoka S."/>
            <person name="Chiba Y."/>
            <person name="Ishida S."/>
            <person name="Ono Y."/>
            <person name="Takiguchi S."/>
            <person name="Watanabe S."/>
            <person name="Yosida M."/>
            <person name="Hotuta T."/>
            <person name="Kusano J."/>
            <person name="Kanehori K."/>
            <person name="Takahashi-Fujii A."/>
            <person name="Hara H."/>
            <person name="Tanase T.-O."/>
            <person name="Nomura Y."/>
            <person name="Togiya S."/>
            <person name="Komai F."/>
            <person name="Hara R."/>
            <person name="Takeuchi K."/>
            <person name="Arita M."/>
            <person name="Imose N."/>
            <person name="Musashino K."/>
            <person name="Yuuki H."/>
            <person name="Oshima A."/>
            <person name="Sasaki N."/>
            <person name="Aotsuka S."/>
            <person name="Yoshikawa Y."/>
            <person name="Matsunawa H."/>
            <person name="Ichihara T."/>
            <person name="Shiohata N."/>
            <person name="Sano S."/>
            <person name="Moriya S."/>
            <person name="Momiyama H."/>
            <person name="Satoh N."/>
            <person name="Takami S."/>
            <person name="Terashima Y."/>
            <person name="Suzuki O."/>
            <person name="Nakagawa S."/>
            <person name="Senoh A."/>
            <person name="Mizoguchi H."/>
            <person name="Goto Y."/>
            <person name="Shimizu F."/>
            <person name="Wakebe H."/>
            <person name="Hishigaki H."/>
            <person name="Watanabe T."/>
            <person name="Sugiyama A."/>
            <person name="Takemoto M."/>
            <person name="Kawakami B."/>
            <person name="Yamazaki M."/>
            <person name="Watanabe K."/>
            <person name="Kumagai A."/>
            <person name="Itakura S."/>
            <person name="Fukuzumi Y."/>
            <person name="Fujimori Y."/>
            <person name="Komiyama M."/>
            <person name="Tashiro H."/>
            <person name="Tanigami A."/>
            <person name="Fujiwara T."/>
            <person name="Ono T."/>
            <person name="Yamada K."/>
            <person name="Fujii Y."/>
            <person name="Ozaki K."/>
            <person name="Hirao M."/>
            <person name="Ohmori Y."/>
            <person name="Kawabata A."/>
            <person name="Hikiji T."/>
            <person name="Kobatake N."/>
            <person name="Inagaki H."/>
            <person name="Ikema Y."/>
            <person name="Okamoto S."/>
            <person name="Okitani R."/>
            <person name="Kawakami T."/>
            <person name="Noguchi S."/>
            <person name="Itoh T."/>
            <person name="Shigeta K."/>
            <person name="Senba T."/>
            <person name="Matsumura K."/>
            <person name="Nakajima Y."/>
            <person name="Mizuno T."/>
            <person name="Morinaga M."/>
            <person name="Sasaki M."/>
            <person name="Togashi T."/>
            <person name="Oyama M."/>
            <person name="Hata H."/>
            <person name="Watanabe M."/>
            <person name="Komatsu T."/>
            <person name="Mizushima-Sugano J."/>
            <person name="Satoh T."/>
            <person name="Shirai Y."/>
            <person name="Takahashi Y."/>
            <person name="Nakagawa K."/>
            <person name="Okumura K."/>
            <person name="Nagase T."/>
            <person name="Nomura N."/>
            <person name="Kikuchi H."/>
            <person name="Masuho Y."/>
            <person name="Yamashita R."/>
            <person name="Nakai K."/>
            <person name="Yada T."/>
            <person name="Nakamura Y."/>
            <person name="Ohara O."/>
            <person name="Isogai T."/>
            <person name="Sugano S."/>
        </authorList>
    </citation>
    <scope>NUCLEOTIDE SEQUENCE [LARGE SCALE MRNA]</scope>
    <source>
        <tissue>Mammary gland</tissue>
    </source>
</reference>
<name>CR015_HUMAN</name>
<keyword id="KW-0472">Membrane</keyword>
<keyword id="KW-1185">Reference proteome</keyword>
<keyword id="KW-0812">Transmembrane</keyword>
<keyword id="KW-1133">Transmembrane helix</keyword>
<gene>
    <name type="primary">C18orf15</name>
</gene>